<dbReference type="EMBL" id="CP000653">
    <property type="protein sequence ID" value="ABP62126.1"/>
    <property type="molecule type" value="Genomic_DNA"/>
</dbReference>
<dbReference type="RefSeq" id="WP_015960454.1">
    <property type="nucleotide sequence ID" value="NC_009436.1"/>
</dbReference>
<dbReference type="SMR" id="A4WEJ6"/>
<dbReference type="STRING" id="399742.Ent638_3467"/>
<dbReference type="KEGG" id="ent:Ent638_3467"/>
<dbReference type="eggNOG" id="COG2371">
    <property type="taxonomic scope" value="Bacteria"/>
</dbReference>
<dbReference type="HOGENOM" id="CLU_093757_2_0_6"/>
<dbReference type="OrthoDB" id="5421304at2"/>
<dbReference type="Proteomes" id="UP000000230">
    <property type="component" value="Chromosome"/>
</dbReference>
<dbReference type="GO" id="GO:0005737">
    <property type="term" value="C:cytoplasm"/>
    <property type="evidence" value="ECO:0007669"/>
    <property type="project" value="UniProtKB-SubCell"/>
</dbReference>
<dbReference type="GO" id="GO:0016151">
    <property type="term" value="F:nickel cation binding"/>
    <property type="evidence" value="ECO:0007669"/>
    <property type="project" value="UniProtKB-UniRule"/>
</dbReference>
<dbReference type="GO" id="GO:0051082">
    <property type="term" value="F:unfolded protein binding"/>
    <property type="evidence" value="ECO:0007669"/>
    <property type="project" value="UniProtKB-UniRule"/>
</dbReference>
<dbReference type="GO" id="GO:0006457">
    <property type="term" value="P:protein folding"/>
    <property type="evidence" value="ECO:0007669"/>
    <property type="project" value="InterPro"/>
</dbReference>
<dbReference type="GO" id="GO:0065003">
    <property type="term" value="P:protein-containing complex assembly"/>
    <property type="evidence" value="ECO:0007669"/>
    <property type="project" value="InterPro"/>
</dbReference>
<dbReference type="GO" id="GO:0019627">
    <property type="term" value="P:urea metabolic process"/>
    <property type="evidence" value="ECO:0007669"/>
    <property type="project" value="InterPro"/>
</dbReference>
<dbReference type="CDD" id="cd00571">
    <property type="entry name" value="UreE"/>
    <property type="match status" value="1"/>
</dbReference>
<dbReference type="Gene3D" id="2.60.260.20">
    <property type="entry name" value="Urease metallochaperone UreE, N-terminal domain"/>
    <property type="match status" value="1"/>
</dbReference>
<dbReference type="Gene3D" id="3.30.70.790">
    <property type="entry name" value="UreE, C-terminal domain"/>
    <property type="match status" value="1"/>
</dbReference>
<dbReference type="HAMAP" id="MF_00822">
    <property type="entry name" value="UreE"/>
    <property type="match status" value="1"/>
</dbReference>
<dbReference type="InterPro" id="IPR012406">
    <property type="entry name" value="UreE"/>
</dbReference>
<dbReference type="InterPro" id="IPR007864">
    <property type="entry name" value="UreE_C_dom"/>
</dbReference>
<dbReference type="InterPro" id="IPR004029">
    <property type="entry name" value="UreE_N"/>
</dbReference>
<dbReference type="InterPro" id="IPR036118">
    <property type="entry name" value="UreE_N_sf"/>
</dbReference>
<dbReference type="NCBIfam" id="NF009751">
    <property type="entry name" value="PRK13261.1-1"/>
    <property type="match status" value="1"/>
</dbReference>
<dbReference type="Pfam" id="PF05194">
    <property type="entry name" value="UreE_C"/>
    <property type="match status" value="1"/>
</dbReference>
<dbReference type="Pfam" id="PF02814">
    <property type="entry name" value="UreE_N"/>
    <property type="match status" value="1"/>
</dbReference>
<dbReference type="PIRSF" id="PIRSF036402">
    <property type="entry name" value="Ureas_acces_UreE"/>
    <property type="match status" value="1"/>
</dbReference>
<dbReference type="SMART" id="SM00988">
    <property type="entry name" value="UreE_N"/>
    <property type="match status" value="1"/>
</dbReference>
<dbReference type="SUPFAM" id="SSF69737">
    <property type="entry name" value="Urease metallochaperone UreE, C-terminal domain"/>
    <property type="match status" value="1"/>
</dbReference>
<dbReference type="SUPFAM" id="SSF69287">
    <property type="entry name" value="Urease metallochaperone UreE, N-terminal domain"/>
    <property type="match status" value="1"/>
</dbReference>
<comment type="function">
    <text evidence="1">Involved in urease metallocenter assembly. Binds nickel. Probably functions as a nickel donor during metallocenter assembly.</text>
</comment>
<comment type="subcellular location">
    <subcellularLocation>
        <location evidence="1">Cytoplasm</location>
    </subcellularLocation>
</comment>
<comment type="similarity">
    <text evidence="1">Belongs to the UreE family.</text>
</comment>
<evidence type="ECO:0000255" key="1">
    <source>
        <dbReference type="HAMAP-Rule" id="MF_00822"/>
    </source>
</evidence>
<name>UREE_ENT38</name>
<gene>
    <name evidence="1" type="primary">ureE</name>
    <name type="ordered locus">Ent638_3467</name>
</gene>
<keyword id="KW-0143">Chaperone</keyword>
<keyword id="KW-0963">Cytoplasm</keyword>
<keyword id="KW-0533">Nickel</keyword>
<keyword id="KW-0996">Nickel insertion</keyword>
<protein>
    <recommendedName>
        <fullName evidence="1">Urease accessory protein UreE</fullName>
    </recommendedName>
</protein>
<proteinExistence type="inferred from homology"/>
<accession>A4WEJ6</accession>
<organism>
    <name type="scientific">Enterobacter sp. (strain 638)</name>
    <dbReference type="NCBI Taxonomy" id="399742"/>
    <lineage>
        <taxon>Bacteria</taxon>
        <taxon>Pseudomonadati</taxon>
        <taxon>Pseudomonadota</taxon>
        <taxon>Gammaproteobacteria</taxon>
        <taxon>Enterobacterales</taxon>
        <taxon>Enterobacteriaceae</taxon>
        <taxon>Enterobacter</taxon>
    </lineage>
</organism>
<sequence length="152" mass="16876">MITLTQRLDHAHPVTASVTLPIDIRVKSRAKVELNDGREAGLMLPRGLLLRGGDLLSTDDGNEIIEVIAAPESVSVVRCADPYLLARACYHLGNRHVPLQIMPGELRYHHDHVLDDMLRQFDLDVTFAHLPFEPEAGAYTSDAHSHSHAHSH</sequence>
<feature type="chain" id="PRO_1000083890" description="Urease accessory protein UreE">
    <location>
        <begin position="1"/>
        <end position="152"/>
    </location>
</feature>
<reference key="1">
    <citation type="journal article" date="2010" name="PLoS Genet.">
        <title>Genome sequence of the plant growth promoting endophytic bacterium Enterobacter sp. 638.</title>
        <authorList>
            <person name="Taghavi S."/>
            <person name="van der Lelie D."/>
            <person name="Hoffman A."/>
            <person name="Zhang Y.B."/>
            <person name="Walla M.D."/>
            <person name="Vangronsveld J."/>
            <person name="Newman L."/>
            <person name="Monchy S."/>
        </authorList>
    </citation>
    <scope>NUCLEOTIDE SEQUENCE [LARGE SCALE GENOMIC DNA]</scope>
    <source>
        <strain>638</strain>
    </source>
</reference>